<keyword id="KW-0687">Ribonucleoprotein</keyword>
<keyword id="KW-0689">Ribosomal protein</keyword>
<keyword id="KW-0694">RNA-binding</keyword>
<keyword id="KW-0699">rRNA-binding</keyword>
<keyword id="KW-0820">tRNA-binding</keyword>
<organism>
    <name type="scientific">Mycobacterium bovis (strain BCG / Pasteur 1173P2)</name>
    <dbReference type="NCBI Taxonomy" id="410289"/>
    <lineage>
        <taxon>Bacteria</taxon>
        <taxon>Bacillati</taxon>
        <taxon>Actinomycetota</taxon>
        <taxon>Actinomycetes</taxon>
        <taxon>Mycobacteriales</taxon>
        <taxon>Mycobacteriaceae</taxon>
        <taxon>Mycobacterium</taxon>
        <taxon>Mycobacterium tuberculosis complex</taxon>
    </lineage>
</organism>
<comment type="function">
    <text evidence="1">Located at the top of the head of the 30S subunit, it contacts several helices of the 16S rRNA. In the 70S ribosome it contacts the 23S rRNA (bridge B1a) and protein L5 of the 50S subunit (bridge B1b), connecting the 2 subunits; these bridges are implicated in subunit movement. Contacts the tRNAs in the A and P-sites.</text>
</comment>
<comment type="subunit">
    <text evidence="1">Part of the 30S ribosomal subunit. Forms a loose heterodimer with protein S19. Forms two bridges to the 50S subunit in the 70S ribosome.</text>
</comment>
<comment type="similarity">
    <text evidence="1">Belongs to the universal ribosomal protein uS13 family.</text>
</comment>
<name>RS13_MYCBP</name>
<dbReference type="EMBL" id="AM408590">
    <property type="protein sequence ID" value="CAL73514.1"/>
    <property type="molecule type" value="Genomic_DNA"/>
</dbReference>
<dbReference type="RefSeq" id="WP_003418360.1">
    <property type="nucleotide sequence ID" value="NC_008769.1"/>
</dbReference>
<dbReference type="SMR" id="A1KPE6"/>
<dbReference type="GeneID" id="45427449"/>
<dbReference type="KEGG" id="mbb:BCG_3525c"/>
<dbReference type="HOGENOM" id="CLU_103849_1_2_11"/>
<dbReference type="Proteomes" id="UP000001472">
    <property type="component" value="Chromosome"/>
</dbReference>
<dbReference type="GO" id="GO:0005829">
    <property type="term" value="C:cytosol"/>
    <property type="evidence" value="ECO:0007669"/>
    <property type="project" value="TreeGrafter"/>
</dbReference>
<dbReference type="GO" id="GO:0015935">
    <property type="term" value="C:small ribosomal subunit"/>
    <property type="evidence" value="ECO:0007669"/>
    <property type="project" value="TreeGrafter"/>
</dbReference>
<dbReference type="GO" id="GO:0019843">
    <property type="term" value="F:rRNA binding"/>
    <property type="evidence" value="ECO:0007669"/>
    <property type="project" value="UniProtKB-UniRule"/>
</dbReference>
<dbReference type="GO" id="GO:0003735">
    <property type="term" value="F:structural constituent of ribosome"/>
    <property type="evidence" value="ECO:0007669"/>
    <property type="project" value="InterPro"/>
</dbReference>
<dbReference type="GO" id="GO:0000049">
    <property type="term" value="F:tRNA binding"/>
    <property type="evidence" value="ECO:0007669"/>
    <property type="project" value="UniProtKB-UniRule"/>
</dbReference>
<dbReference type="GO" id="GO:0006412">
    <property type="term" value="P:translation"/>
    <property type="evidence" value="ECO:0007669"/>
    <property type="project" value="UniProtKB-UniRule"/>
</dbReference>
<dbReference type="FunFam" id="1.10.8.50:FF:000001">
    <property type="entry name" value="30S ribosomal protein S13"/>
    <property type="match status" value="1"/>
</dbReference>
<dbReference type="FunFam" id="4.10.910.10:FF:000001">
    <property type="entry name" value="30S ribosomal protein S13"/>
    <property type="match status" value="1"/>
</dbReference>
<dbReference type="Gene3D" id="1.10.8.50">
    <property type="match status" value="1"/>
</dbReference>
<dbReference type="Gene3D" id="4.10.910.10">
    <property type="entry name" value="30s ribosomal protein s13, domain 2"/>
    <property type="match status" value="1"/>
</dbReference>
<dbReference type="HAMAP" id="MF_01315">
    <property type="entry name" value="Ribosomal_uS13"/>
    <property type="match status" value="1"/>
</dbReference>
<dbReference type="InterPro" id="IPR027437">
    <property type="entry name" value="Rbsml_uS13_C"/>
</dbReference>
<dbReference type="InterPro" id="IPR001892">
    <property type="entry name" value="Ribosomal_uS13"/>
</dbReference>
<dbReference type="InterPro" id="IPR010979">
    <property type="entry name" value="Ribosomal_uS13-like_H2TH"/>
</dbReference>
<dbReference type="InterPro" id="IPR019980">
    <property type="entry name" value="Ribosomal_uS13_bac-type"/>
</dbReference>
<dbReference type="InterPro" id="IPR018269">
    <property type="entry name" value="Ribosomal_uS13_CS"/>
</dbReference>
<dbReference type="NCBIfam" id="TIGR03631">
    <property type="entry name" value="uS13_bact"/>
    <property type="match status" value="1"/>
</dbReference>
<dbReference type="PANTHER" id="PTHR10871">
    <property type="entry name" value="30S RIBOSOMAL PROTEIN S13/40S RIBOSOMAL PROTEIN S18"/>
    <property type="match status" value="1"/>
</dbReference>
<dbReference type="PANTHER" id="PTHR10871:SF1">
    <property type="entry name" value="SMALL RIBOSOMAL SUBUNIT PROTEIN US13M"/>
    <property type="match status" value="1"/>
</dbReference>
<dbReference type="Pfam" id="PF00416">
    <property type="entry name" value="Ribosomal_S13"/>
    <property type="match status" value="1"/>
</dbReference>
<dbReference type="PIRSF" id="PIRSF002134">
    <property type="entry name" value="Ribosomal_S13"/>
    <property type="match status" value="1"/>
</dbReference>
<dbReference type="SUPFAM" id="SSF46946">
    <property type="entry name" value="S13-like H2TH domain"/>
    <property type="match status" value="1"/>
</dbReference>
<dbReference type="PROSITE" id="PS00646">
    <property type="entry name" value="RIBOSOMAL_S13_1"/>
    <property type="match status" value="1"/>
</dbReference>
<dbReference type="PROSITE" id="PS50159">
    <property type="entry name" value="RIBOSOMAL_S13_2"/>
    <property type="match status" value="1"/>
</dbReference>
<protein>
    <recommendedName>
        <fullName evidence="1">Small ribosomal subunit protein uS13</fullName>
    </recommendedName>
    <alternativeName>
        <fullName evidence="3">30S ribosomal protein S13</fullName>
    </alternativeName>
</protein>
<accession>A1KPE6</accession>
<feature type="chain" id="PRO_0000306647" description="Small ribosomal subunit protein uS13">
    <location>
        <begin position="1"/>
        <end position="124"/>
    </location>
</feature>
<feature type="region of interest" description="Disordered" evidence="2">
    <location>
        <begin position="94"/>
        <end position="124"/>
    </location>
</feature>
<evidence type="ECO:0000255" key="1">
    <source>
        <dbReference type="HAMAP-Rule" id="MF_01315"/>
    </source>
</evidence>
<evidence type="ECO:0000256" key="2">
    <source>
        <dbReference type="SAM" id="MobiDB-lite"/>
    </source>
</evidence>
<evidence type="ECO:0000305" key="3"/>
<proteinExistence type="inferred from homology"/>
<gene>
    <name evidence="1" type="primary">rpsM</name>
    <name type="ordered locus">BCG_3525c</name>
</gene>
<sequence>MARLVGVDLPRDKRMEVALTYIFGIGRTRSNEILAATGIDRDLRTRDLTEEQLIHLRDYIEANLKVEGDLRREVQADIRRKIEIGCYQGLRHRRGMPVRGQRTKTNARTRKGPKRTIAGKKKAR</sequence>
<reference key="1">
    <citation type="journal article" date="2007" name="Proc. Natl. Acad. Sci. U.S.A.">
        <title>Genome plasticity of BCG and impact on vaccine efficacy.</title>
        <authorList>
            <person name="Brosch R."/>
            <person name="Gordon S.V."/>
            <person name="Garnier T."/>
            <person name="Eiglmeier K."/>
            <person name="Frigui W."/>
            <person name="Valenti P."/>
            <person name="Dos Santos S."/>
            <person name="Duthoy S."/>
            <person name="Lacroix C."/>
            <person name="Garcia-Pelayo C."/>
            <person name="Inwald J.K."/>
            <person name="Golby P."/>
            <person name="Garcia J.N."/>
            <person name="Hewinson R.G."/>
            <person name="Behr M.A."/>
            <person name="Quail M.A."/>
            <person name="Churcher C."/>
            <person name="Barrell B.G."/>
            <person name="Parkhill J."/>
            <person name="Cole S.T."/>
        </authorList>
    </citation>
    <scope>NUCLEOTIDE SEQUENCE [LARGE SCALE GENOMIC DNA]</scope>
    <source>
        <strain>BCG / Pasteur 1173P2</strain>
    </source>
</reference>